<feature type="chain" id="PRO_0000296499" description="Large ribosomal subunit protein bL32">
    <location>
        <begin position="1"/>
        <end position="60"/>
    </location>
</feature>
<feature type="region of interest" description="Disordered" evidence="2">
    <location>
        <begin position="1"/>
        <end position="60"/>
    </location>
</feature>
<feature type="compositionally biased region" description="Basic residues" evidence="2">
    <location>
        <begin position="1"/>
        <end position="16"/>
    </location>
</feature>
<feature type="compositionally biased region" description="Basic and acidic residues" evidence="2">
    <location>
        <begin position="28"/>
        <end position="44"/>
    </location>
</feature>
<evidence type="ECO:0000255" key="1">
    <source>
        <dbReference type="HAMAP-Rule" id="MF_00340"/>
    </source>
</evidence>
<evidence type="ECO:0000256" key="2">
    <source>
        <dbReference type="SAM" id="MobiDB-lite"/>
    </source>
</evidence>
<evidence type="ECO:0000305" key="3"/>
<gene>
    <name evidence="1" type="primary">rpmF</name>
    <name type="ordered locus">Meso_3426</name>
</gene>
<reference key="1">
    <citation type="submission" date="2006-06" db="EMBL/GenBank/DDBJ databases">
        <title>Complete sequence of chromosome of Mesorhizobium sp. BNC1.</title>
        <authorList>
            <consortium name="US DOE Joint Genome Institute"/>
            <person name="Copeland A."/>
            <person name="Lucas S."/>
            <person name="Lapidus A."/>
            <person name="Barry K."/>
            <person name="Detter J.C."/>
            <person name="Glavina del Rio T."/>
            <person name="Hammon N."/>
            <person name="Israni S."/>
            <person name="Dalin E."/>
            <person name="Tice H."/>
            <person name="Pitluck S."/>
            <person name="Chertkov O."/>
            <person name="Brettin T."/>
            <person name="Bruce D."/>
            <person name="Han C."/>
            <person name="Tapia R."/>
            <person name="Gilna P."/>
            <person name="Schmutz J."/>
            <person name="Larimer F."/>
            <person name="Land M."/>
            <person name="Hauser L."/>
            <person name="Kyrpides N."/>
            <person name="Mikhailova N."/>
            <person name="Richardson P."/>
        </authorList>
    </citation>
    <scope>NUCLEOTIDE SEQUENCE [LARGE SCALE GENOMIC DNA]</scope>
    <source>
        <strain>BNC1</strain>
    </source>
</reference>
<name>RL32_CHESB</name>
<dbReference type="EMBL" id="CP000390">
    <property type="protein sequence ID" value="ABG64797.1"/>
    <property type="molecule type" value="Genomic_DNA"/>
</dbReference>
<dbReference type="SMR" id="Q11CS8"/>
<dbReference type="STRING" id="266779.Meso_3426"/>
<dbReference type="KEGG" id="mes:Meso_3426"/>
<dbReference type="eggNOG" id="COG0333">
    <property type="taxonomic scope" value="Bacteria"/>
</dbReference>
<dbReference type="HOGENOM" id="CLU_129084_2_2_5"/>
<dbReference type="OrthoDB" id="9801927at2"/>
<dbReference type="GO" id="GO:0015934">
    <property type="term" value="C:large ribosomal subunit"/>
    <property type="evidence" value="ECO:0007669"/>
    <property type="project" value="InterPro"/>
</dbReference>
<dbReference type="GO" id="GO:0003735">
    <property type="term" value="F:structural constituent of ribosome"/>
    <property type="evidence" value="ECO:0007669"/>
    <property type="project" value="InterPro"/>
</dbReference>
<dbReference type="GO" id="GO:0006412">
    <property type="term" value="P:translation"/>
    <property type="evidence" value="ECO:0007669"/>
    <property type="project" value="UniProtKB-UniRule"/>
</dbReference>
<dbReference type="Gene3D" id="1.20.5.640">
    <property type="entry name" value="Single helix bin"/>
    <property type="match status" value="1"/>
</dbReference>
<dbReference type="HAMAP" id="MF_00340">
    <property type="entry name" value="Ribosomal_bL32"/>
    <property type="match status" value="1"/>
</dbReference>
<dbReference type="InterPro" id="IPR002677">
    <property type="entry name" value="Ribosomal_bL32"/>
</dbReference>
<dbReference type="InterPro" id="IPR044957">
    <property type="entry name" value="Ribosomal_bL32_bact"/>
</dbReference>
<dbReference type="InterPro" id="IPR011332">
    <property type="entry name" value="Ribosomal_zn-bd"/>
</dbReference>
<dbReference type="NCBIfam" id="TIGR01031">
    <property type="entry name" value="rpmF_bact"/>
    <property type="match status" value="1"/>
</dbReference>
<dbReference type="PANTHER" id="PTHR35534">
    <property type="entry name" value="50S RIBOSOMAL PROTEIN L32"/>
    <property type="match status" value="1"/>
</dbReference>
<dbReference type="PANTHER" id="PTHR35534:SF1">
    <property type="entry name" value="LARGE RIBOSOMAL SUBUNIT PROTEIN BL32"/>
    <property type="match status" value="1"/>
</dbReference>
<dbReference type="Pfam" id="PF01783">
    <property type="entry name" value="Ribosomal_L32p"/>
    <property type="match status" value="1"/>
</dbReference>
<dbReference type="SUPFAM" id="SSF57829">
    <property type="entry name" value="Zn-binding ribosomal proteins"/>
    <property type="match status" value="1"/>
</dbReference>
<organism>
    <name type="scientific">Chelativorans sp. (strain BNC1)</name>
    <dbReference type="NCBI Taxonomy" id="266779"/>
    <lineage>
        <taxon>Bacteria</taxon>
        <taxon>Pseudomonadati</taxon>
        <taxon>Pseudomonadota</taxon>
        <taxon>Alphaproteobacteria</taxon>
        <taxon>Hyphomicrobiales</taxon>
        <taxon>Phyllobacteriaceae</taxon>
        <taxon>Chelativorans</taxon>
    </lineage>
</organism>
<keyword id="KW-0687">Ribonucleoprotein</keyword>
<keyword id="KW-0689">Ribosomal protein</keyword>
<accession>Q11CS8</accession>
<comment type="similarity">
    <text evidence="1">Belongs to the bacterial ribosomal protein bL32 family.</text>
</comment>
<proteinExistence type="inferred from homology"/>
<sequence length="60" mass="6833">MAVPKRKTSPSKRGMRRSADALKAPTYVEDKNSGELRRPHHVDLKTGMYRGRQVLEPKEA</sequence>
<protein>
    <recommendedName>
        <fullName evidence="1">Large ribosomal subunit protein bL32</fullName>
    </recommendedName>
    <alternativeName>
        <fullName evidence="3">50S ribosomal protein L32</fullName>
    </alternativeName>
</protein>